<reference key="1">
    <citation type="journal article" date="2007" name="Plant Cell">
        <title>Dothideomycete-plant interactions illuminated by genome sequencing and EST analysis of the wheat pathogen Stagonospora nodorum.</title>
        <authorList>
            <person name="Hane J.K."/>
            <person name="Lowe R.G.T."/>
            <person name="Solomon P.S."/>
            <person name="Tan K.-C."/>
            <person name="Schoch C.L."/>
            <person name="Spatafora J.W."/>
            <person name="Crous P.W."/>
            <person name="Kodira C.D."/>
            <person name="Birren B.W."/>
            <person name="Galagan J.E."/>
            <person name="Torriani S.F.F."/>
            <person name="McDonald B.A."/>
            <person name="Oliver R.P."/>
        </authorList>
    </citation>
    <scope>NUCLEOTIDE SEQUENCE [LARGE SCALE GENOMIC DNA]</scope>
    <source>
        <strain>SN15 / ATCC MYA-4574 / FGSC 10173</strain>
    </source>
</reference>
<gene>
    <name type="primary">LSM6</name>
    <name type="ORF">SNOG_03875</name>
</gene>
<feature type="chain" id="PRO_0000333603" description="U6 snRNA-associated Sm-like protein LSm6">
    <location>
        <begin position="1"/>
        <end position="89"/>
    </location>
</feature>
<feature type="domain" description="Sm" evidence="2">
    <location>
        <begin position="18"/>
        <end position="89"/>
    </location>
</feature>
<feature type="region of interest" description="Disordered" evidence="3">
    <location>
        <begin position="1"/>
        <end position="21"/>
    </location>
</feature>
<dbReference type="EMBL" id="CH445329">
    <property type="protein sequence ID" value="EAT89080.1"/>
    <property type="status" value="ALT_SEQ"/>
    <property type="molecule type" value="Genomic_DNA"/>
</dbReference>
<dbReference type="RefSeq" id="XP_001794420.1">
    <property type="nucleotide sequence ID" value="XM_001794368.1"/>
</dbReference>
<dbReference type="SMR" id="Q0UWI9"/>
<dbReference type="FunCoup" id="Q0UWI9">
    <property type="interactions" value="721"/>
</dbReference>
<dbReference type="STRING" id="321614.Q0UWI9"/>
<dbReference type="GeneID" id="5971283"/>
<dbReference type="KEGG" id="pno:SNOG_03875"/>
<dbReference type="VEuPathDB" id="FungiDB:JI435_038750"/>
<dbReference type="eggNOG" id="KOG1783">
    <property type="taxonomic scope" value="Eukaryota"/>
</dbReference>
<dbReference type="InParanoid" id="Q0UWI9"/>
<dbReference type="OrthoDB" id="268799at2759"/>
<dbReference type="Proteomes" id="UP000001055">
    <property type="component" value="Unassembled WGS sequence"/>
</dbReference>
<dbReference type="GO" id="GO:0005730">
    <property type="term" value="C:nucleolus"/>
    <property type="evidence" value="ECO:0000318"/>
    <property type="project" value="GO_Central"/>
</dbReference>
<dbReference type="GO" id="GO:0000932">
    <property type="term" value="C:P-body"/>
    <property type="evidence" value="ECO:0000318"/>
    <property type="project" value="GO_Central"/>
</dbReference>
<dbReference type="GO" id="GO:0005732">
    <property type="term" value="C:sno(s)RNA-containing ribonucleoprotein complex"/>
    <property type="evidence" value="ECO:0000318"/>
    <property type="project" value="GO_Central"/>
</dbReference>
<dbReference type="GO" id="GO:0005681">
    <property type="term" value="C:spliceosomal complex"/>
    <property type="evidence" value="ECO:0007669"/>
    <property type="project" value="UniProtKB-KW"/>
</dbReference>
<dbReference type="GO" id="GO:0046540">
    <property type="term" value="C:U4/U6 x U5 tri-snRNP complex"/>
    <property type="evidence" value="ECO:0000318"/>
    <property type="project" value="GO_Central"/>
</dbReference>
<dbReference type="GO" id="GO:0005688">
    <property type="term" value="C:U6 snRNP"/>
    <property type="evidence" value="ECO:0000318"/>
    <property type="project" value="GO_Central"/>
</dbReference>
<dbReference type="GO" id="GO:0003723">
    <property type="term" value="F:RNA binding"/>
    <property type="evidence" value="ECO:0000318"/>
    <property type="project" value="GO_Central"/>
</dbReference>
<dbReference type="GO" id="GO:0030490">
    <property type="term" value="P:maturation of SSU-rRNA"/>
    <property type="evidence" value="ECO:0000318"/>
    <property type="project" value="GO_Central"/>
</dbReference>
<dbReference type="GO" id="GO:0000398">
    <property type="term" value="P:mRNA splicing, via spliceosome"/>
    <property type="evidence" value="ECO:0000318"/>
    <property type="project" value="GO_Central"/>
</dbReference>
<dbReference type="GO" id="GO:0008033">
    <property type="term" value="P:tRNA processing"/>
    <property type="evidence" value="ECO:0007669"/>
    <property type="project" value="UniProtKB-KW"/>
</dbReference>
<dbReference type="CDD" id="cd01726">
    <property type="entry name" value="LSm6"/>
    <property type="match status" value="1"/>
</dbReference>
<dbReference type="FunFam" id="2.30.30.100:FF:000037">
    <property type="entry name" value="U6 snRNA-associated Sm-like protein LSm6"/>
    <property type="match status" value="1"/>
</dbReference>
<dbReference type="Gene3D" id="2.30.30.100">
    <property type="match status" value="1"/>
</dbReference>
<dbReference type="InterPro" id="IPR016487">
    <property type="entry name" value="Lsm6/sSmF"/>
</dbReference>
<dbReference type="InterPro" id="IPR010920">
    <property type="entry name" value="LSM_dom_sf"/>
</dbReference>
<dbReference type="InterPro" id="IPR047575">
    <property type="entry name" value="Sm"/>
</dbReference>
<dbReference type="InterPro" id="IPR001163">
    <property type="entry name" value="Sm_dom_euk/arc"/>
</dbReference>
<dbReference type="PANTHER" id="PTHR11021">
    <property type="entry name" value="SMALL NUCLEAR RIBONUCLEOPROTEIN F SNRNP-F"/>
    <property type="match status" value="1"/>
</dbReference>
<dbReference type="PANTHER" id="PTHR11021:SF1">
    <property type="entry name" value="U6 SNRNA-ASSOCIATED SM-LIKE PROTEIN LSM6"/>
    <property type="match status" value="1"/>
</dbReference>
<dbReference type="Pfam" id="PF01423">
    <property type="entry name" value="LSM"/>
    <property type="match status" value="1"/>
</dbReference>
<dbReference type="SMART" id="SM00651">
    <property type="entry name" value="Sm"/>
    <property type="match status" value="1"/>
</dbReference>
<dbReference type="SUPFAM" id="SSF50182">
    <property type="entry name" value="Sm-like ribonucleoproteins"/>
    <property type="match status" value="1"/>
</dbReference>
<dbReference type="PROSITE" id="PS52002">
    <property type="entry name" value="SM"/>
    <property type="match status" value="1"/>
</dbReference>
<proteinExistence type="inferred from homology"/>
<organism>
    <name type="scientific">Phaeosphaeria nodorum (strain SN15 / ATCC MYA-4574 / FGSC 10173)</name>
    <name type="common">Glume blotch fungus</name>
    <name type="synonym">Parastagonospora nodorum</name>
    <dbReference type="NCBI Taxonomy" id="321614"/>
    <lineage>
        <taxon>Eukaryota</taxon>
        <taxon>Fungi</taxon>
        <taxon>Dikarya</taxon>
        <taxon>Ascomycota</taxon>
        <taxon>Pezizomycotina</taxon>
        <taxon>Dothideomycetes</taxon>
        <taxon>Pleosporomycetidae</taxon>
        <taxon>Pleosporales</taxon>
        <taxon>Pleosporineae</taxon>
        <taxon>Phaeosphaeriaceae</taxon>
        <taxon>Parastagonospora</taxon>
    </lineage>
</organism>
<protein>
    <recommendedName>
        <fullName>U6 snRNA-associated Sm-like protein LSm6</fullName>
    </recommendedName>
</protein>
<sequence length="89" mass="9420">MSTNGESPAPEGAGDSRDPSGFLSEIIGAPVTVKLNSGIVYKGDLQSVDGYMNIALERCKEVAEGRVIRNWGDAFVRGNNVTYISADNA</sequence>
<comment type="function">
    <text evidence="1">Component of LSm protein complexes, which are involved in RNA processing and may function in a chaperone-like manner, facilitating the efficient association of RNA processing factors with their substrates. Component of the cytoplasmic LSM1-LSM7 complex, which is thought to be involved in mRNA degradation by activating the decapping step in the 5'-to-3' mRNA decay pathway. Component of the nuclear LSM2-LSM8 complex, which is involved in splicing of nuclear mRNAs. LSM2-LSM8 associates with multiple snRNP complexes containing the U6 snRNA (U4/U6 di-snRNP, spliceosomal U4/U6.U5 tri-snRNP, and free U6 snRNP). It binds directly to the 3'-terminal U-tract of U6 snRNA and plays a role in the biogenesis and stability of the U6 snRNP and U4/U6 snRNP complexes. LSM2-LSM8 probably also is involved degradation of nuclear pre-mRNA by targeting them for decapping, and in processing of pre-tRNAs, pre-rRNAs and U3 snoRNA (By similarity).</text>
</comment>
<comment type="subunit">
    <text evidence="1">Component of the heptameric LSM1-LSM7 complex, which consists of LSM1, LSM2, LSM3, LSM4, LSM5, LSM6 and LSM7. Component of the heptameric LSM2-LSM8 complex, which consists of LSM2, LSM3, LSM4, LSM5, LSM6, LSM7 and LSM8. The LSm subunits form a seven-membered ring structure with a doughnut shape (By similarity).</text>
</comment>
<comment type="subcellular location">
    <subcellularLocation>
        <location evidence="1">Cytoplasm</location>
    </subcellularLocation>
    <subcellularLocation>
        <location evidence="1">Nucleus</location>
    </subcellularLocation>
</comment>
<comment type="similarity">
    <text evidence="4">Belongs to the snRNP Sm proteins family. SmF/LSm6 subfamily.</text>
</comment>
<comment type="sequence caution" evidence="4">
    <conflict type="erroneous gene model prediction">
        <sequence resource="EMBL-CDS" id="EAT89080"/>
    </conflict>
</comment>
<keyword id="KW-0963">Cytoplasm</keyword>
<keyword id="KW-0507">mRNA processing</keyword>
<keyword id="KW-0508">mRNA splicing</keyword>
<keyword id="KW-0539">Nucleus</keyword>
<keyword id="KW-0687">Ribonucleoprotein</keyword>
<keyword id="KW-0694">RNA-binding</keyword>
<keyword id="KW-0698">rRNA processing</keyword>
<keyword id="KW-0747">Spliceosome</keyword>
<keyword id="KW-0819">tRNA processing</keyword>
<evidence type="ECO:0000250" key="1"/>
<evidence type="ECO:0000255" key="2">
    <source>
        <dbReference type="PROSITE-ProRule" id="PRU01346"/>
    </source>
</evidence>
<evidence type="ECO:0000256" key="3">
    <source>
        <dbReference type="SAM" id="MobiDB-lite"/>
    </source>
</evidence>
<evidence type="ECO:0000305" key="4"/>
<accession>Q0UWI9</accession>
<name>LSM6_PHANO</name>